<organism>
    <name type="scientific">Clostridium perfringens (strain 13 / Type A)</name>
    <dbReference type="NCBI Taxonomy" id="195102"/>
    <lineage>
        <taxon>Bacteria</taxon>
        <taxon>Bacillati</taxon>
        <taxon>Bacillota</taxon>
        <taxon>Clostridia</taxon>
        <taxon>Eubacteriales</taxon>
        <taxon>Clostridiaceae</taxon>
        <taxon>Clostridium</taxon>
    </lineage>
</organism>
<evidence type="ECO:0000255" key="1">
    <source>
        <dbReference type="HAMAP-Rule" id="MF_00312"/>
    </source>
</evidence>
<feature type="chain" id="PRO_0000144827" description="V-type ATP synthase subunit F">
    <location>
        <begin position="1"/>
        <end position="105"/>
    </location>
</feature>
<sequence>MDMYKKIGVVGDKDSVLAFKALGIDVFPVVEDEEARKTIDKLAMTGYAVIFVTEHVAKNIEETIERYTRQVLPAVILIPSNQGTLNIGKQRISDNVEKAVGVNIL</sequence>
<dbReference type="EMBL" id="BA000016">
    <property type="protein sequence ID" value="BAB81345.1"/>
    <property type="molecule type" value="Genomic_DNA"/>
</dbReference>
<dbReference type="SMR" id="Q8XJW4"/>
<dbReference type="STRING" id="195102.gene:10490903"/>
<dbReference type="KEGG" id="cpe:CPE1639"/>
<dbReference type="HOGENOM" id="CLU_135754_1_0_9"/>
<dbReference type="Proteomes" id="UP000000818">
    <property type="component" value="Chromosome"/>
</dbReference>
<dbReference type="GO" id="GO:0005524">
    <property type="term" value="F:ATP binding"/>
    <property type="evidence" value="ECO:0007669"/>
    <property type="project" value="UniProtKB-UniRule"/>
</dbReference>
<dbReference type="GO" id="GO:0046933">
    <property type="term" value="F:proton-transporting ATP synthase activity, rotational mechanism"/>
    <property type="evidence" value="ECO:0007669"/>
    <property type="project" value="UniProtKB-UniRule"/>
</dbReference>
<dbReference type="GO" id="GO:0046961">
    <property type="term" value="F:proton-transporting ATPase activity, rotational mechanism"/>
    <property type="evidence" value="ECO:0007669"/>
    <property type="project" value="InterPro"/>
</dbReference>
<dbReference type="GO" id="GO:0042777">
    <property type="term" value="P:proton motive force-driven plasma membrane ATP synthesis"/>
    <property type="evidence" value="ECO:0007669"/>
    <property type="project" value="UniProtKB-UniRule"/>
</dbReference>
<dbReference type="Gene3D" id="3.40.50.10580">
    <property type="entry name" value="ATPase, V1 complex, subunit F"/>
    <property type="match status" value="1"/>
</dbReference>
<dbReference type="HAMAP" id="MF_00312">
    <property type="entry name" value="ATP_synth_F_arch"/>
    <property type="match status" value="1"/>
</dbReference>
<dbReference type="InterPro" id="IPR008218">
    <property type="entry name" value="ATPase_V1-cplx_f_g_su"/>
</dbReference>
<dbReference type="InterPro" id="IPR022944">
    <property type="entry name" value="ATPase_V1-cplx_fsu_bac/arc"/>
</dbReference>
<dbReference type="InterPro" id="IPR036906">
    <property type="entry name" value="ATPase_V1_fsu_sf"/>
</dbReference>
<dbReference type="NCBIfam" id="NF002384">
    <property type="entry name" value="PRK01395.1"/>
    <property type="match status" value="1"/>
</dbReference>
<dbReference type="Pfam" id="PF01990">
    <property type="entry name" value="ATP-synt_F"/>
    <property type="match status" value="1"/>
</dbReference>
<dbReference type="SUPFAM" id="SSF159468">
    <property type="entry name" value="AtpF-like"/>
    <property type="match status" value="1"/>
</dbReference>
<name>VATF_CLOPE</name>
<comment type="function">
    <text evidence="1">Produces ATP from ADP in the presence of a proton gradient across the membrane.</text>
</comment>
<comment type="similarity">
    <text evidence="1">Belongs to the V-ATPase F subunit family.</text>
</comment>
<keyword id="KW-0066">ATP synthesis</keyword>
<keyword id="KW-0375">Hydrogen ion transport</keyword>
<keyword id="KW-0406">Ion transport</keyword>
<keyword id="KW-1185">Reference proteome</keyword>
<keyword id="KW-0813">Transport</keyword>
<protein>
    <recommendedName>
        <fullName evidence="1">V-type ATP synthase subunit F</fullName>
    </recommendedName>
    <alternativeName>
        <fullName evidence="1">V-ATPase subunit F</fullName>
    </alternativeName>
</protein>
<reference key="1">
    <citation type="journal article" date="2002" name="Proc. Natl. Acad. Sci. U.S.A.">
        <title>Complete genome sequence of Clostridium perfringens, an anaerobic flesh-eater.</title>
        <authorList>
            <person name="Shimizu T."/>
            <person name="Ohtani K."/>
            <person name="Hirakawa H."/>
            <person name="Ohshima K."/>
            <person name="Yamashita A."/>
            <person name="Shiba T."/>
            <person name="Ogasawara N."/>
            <person name="Hattori M."/>
            <person name="Kuhara S."/>
            <person name="Hayashi H."/>
        </authorList>
    </citation>
    <scope>NUCLEOTIDE SEQUENCE [LARGE SCALE GENOMIC DNA]</scope>
    <source>
        <strain>13 / Type A</strain>
    </source>
</reference>
<proteinExistence type="inferred from homology"/>
<gene>
    <name evidence="1" type="primary">atpF</name>
    <name type="synonym">ntpF</name>
    <name type="ordered locus">CPE1639</name>
</gene>
<accession>Q8XJW4</accession>